<evidence type="ECO:0000255" key="1">
    <source>
        <dbReference type="HAMAP-Rule" id="MF_01849"/>
    </source>
</evidence>
<evidence type="ECO:0000255" key="2">
    <source>
        <dbReference type="PROSITE-ProRule" id="PRU01266"/>
    </source>
</evidence>
<accession>A4TMU0</accession>
<proteinExistence type="inferred from homology"/>
<sequence length="398" mass="44305">MSEQLLTASTPIDAAPLSDNTVQTTAPATSKINLLDLNRQQMREFFAEMGEKPFRADQVMKWMYHYCYDDFEQMTDINKGLRAKLQRVAEIRAPEVAEEQRSVDGTIKWAIKVGDQQVETVYIPEADRATLCVSSQVGCALECKFCSTAQQGFNRNLRVSEIIGQVWRAAKIIGSLKSTGTRPITNVVMMGMGEPLLNLNNVVPAMDIMMDDFGFGLSKRRVTLSTSGVVPALDKLGDMIDVALAISLHAPTDDIRDEIVPINRKYNIETFLAAVRRYLDKSKANGGRVTVEYVMLDHINDSTEQAHQLAECLKDTPCKINLIPWNPFPGAPYGRSSNSRVDRFSKVLMEYGFTTIVRKTRGDDIDAACGQLAGEVIDRTKRTLKKKMAGEPIAIKTV</sequence>
<organism>
    <name type="scientific">Yersinia pestis (strain Pestoides F)</name>
    <dbReference type="NCBI Taxonomy" id="386656"/>
    <lineage>
        <taxon>Bacteria</taxon>
        <taxon>Pseudomonadati</taxon>
        <taxon>Pseudomonadota</taxon>
        <taxon>Gammaproteobacteria</taxon>
        <taxon>Enterobacterales</taxon>
        <taxon>Yersiniaceae</taxon>
        <taxon>Yersinia</taxon>
    </lineage>
</organism>
<comment type="function">
    <text evidence="1">Specifically methylates position 2 of adenine 2503 in 23S rRNA and position 2 of adenine 37 in tRNAs. m2A2503 modification seems to play a crucial role in the proofreading step occurring at the peptidyl transferase center and thus would serve to optimize ribosomal fidelity.</text>
</comment>
<comment type="catalytic activity">
    <reaction evidence="1">
        <text>adenosine(2503) in 23S rRNA + 2 reduced [2Fe-2S]-[ferredoxin] + 2 S-adenosyl-L-methionine = 2-methyladenosine(2503) in 23S rRNA + 5'-deoxyadenosine + L-methionine + 2 oxidized [2Fe-2S]-[ferredoxin] + S-adenosyl-L-homocysteine</text>
        <dbReference type="Rhea" id="RHEA:42916"/>
        <dbReference type="Rhea" id="RHEA-COMP:10000"/>
        <dbReference type="Rhea" id="RHEA-COMP:10001"/>
        <dbReference type="Rhea" id="RHEA-COMP:10152"/>
        <dbReference type="Rhea" id="RHEA-COMP:10282"/>
        <dbReference type="ChEBI" id="CHEBI:17319"/>
        <dbReference type="ChEBI" id="CHEBI:33737"/>
        <dbReference type="ChEBI" id="CHEBI:33738"/>
        <dbReference type="ChEBI" id="CHEBI:57844"/>
        <dbReference type="ChEBI" id="CHEBI:57856"/>
        <dbReference type="ChEBI" id="CHEBI:59789"/>
        <dbReference type="ChEBI" id="CHEBI:74411"/>
        <dbReference type="ChEBI" id="CHEBI:74497"/>
        <dbReference type="EC" id="2.1.1.192"/>
    </reaction>
</comment>
<comment type="catalytic activity">
    <reaction evidence="1">
        <text>adenosine(37) in tRNA + 2 reduced [2Fe-2S]-[ferredoxin] + 2 S-adenosyl-L-methionine = 2-methyladenosine(37) in tRNA + 5'-deoxyadenosine + L-methionine + 2 oxidized [2Fe-2S]-[ferredoxin] + S-adenosyl-L-homocysteine</text>
        <dbReference type="Rhea" id="RHEA:43332"/>
        <dbReference type="Rhea" id="RHEA-COMP:10000"/>
        <dbReference type="Rhea" id="RHEA-COMP:10001"/>
        <dbReference type="Rhea" id="RHEA-COMP:10162"/>
        <dbReference type="Rhea" id="RHEA-COMP:10485"/>
        <dbReference type="ChEBI" id="CHEBI:17319"/>
        <dbReference type="ChEBI" id="CHEBI:33737"/>
        <dbReference type="ChEBI" id="CHEBI:33738"/>
        <dbReference type="ChEBI" id="CHEBI:57844"/>
        <dbReference type="ChEBI" id="CHEBI:57856"/>
        <dbReference type="ChEBI" id="CHEBI:59789"/>
        <dbReference type="ChEBI" id="CHEBI:74411"/>
        <dbReference type="ChEBI" id="CHEBI:74497"/>
        <dbReference type="EC" id="2.1.1.192"/>
    </reaction>
</comment>
<comment type="cofactor">
    <cofactor evidence="1">
        <name>[4Fe-4S] cluster</name>
        <dbReference type="ChEBI" id="CHEBI:49883"/>
    </cofactor>
    <text evidence="1">Binds 1 [4Fe-4S] cluster. The cluster is coordinated with 3 cysteines and an exchangeable S-adenosyl-L-methionine.</text>
</comment>
<comment type="subcellular location">
    <subcellularLocation>
        <location evidence="1">Cytoplasm</location>
    </subcellularLocation>
</comment>
<comment type="miscellaneous">
    <text evidence="1">Reaction proceeds by a ping-pong mechanism involving intermediate methylation of a conserved cysteine residue.</text>
</comment>
<comment type="similarity">
    <text evidence="1">Belongs to the radical SAM superfamily. RlmN family.</text>
</comment>
<keyword id="KW-0004">4Fe-4S</keyword>
<keyword id="KW-0963">Cytoplasm</keyword>
<keyword id="KW-1015">Disulfide bond</keyword>
<keyword id="KW-0408">Iron</keyword>
<keyword id="KW-0411">Iron-sulfur</keyword>
<keyword id="KW-0479">Metal-binding</keyword>
<keyword id="KW-0489">Methyltransferase</keyword>
<keyword id="KW-0698">rRNA processing</keyword>
<keyword id="KW-0949">S-adenosyl-L-methionine</keyword>
<keyword id="KW-0808">Transferase</keyword>
<keyword id="KW-0819">tRNA processing</keyword>
<reference key="1">
    <citation type="submission" date="2007-02" db="EMBL/GenBank/DDBJ databases">
        <title>Complete sequence of chromosome of Yersinia pestis Pestoides F.</title>
        <authorList>
            <consortium name="US DOE Joint Genome Institute"/>
            <person name="Copeland A."/>
            <person name="Lucas S."/>
            <person name="Lapidus A."/>
            <person name="Barry K."/>
            <person name="Detter J.C."/>
            <person name="Glavina del Rio T."/>
            <person name="Hammon N."/>
            <person name="Israni S."/>
            <person name="Dalin E."/>
            <person name="Tice H."/>
            <person name="Pitluck S."/>
            <person name="Di Bartolo G."/>
            <person name="Chain P."/>
            <person name="Malfatti S."/>
            <person name="Shin M."/>
            <person name="Vergez L."/>
            <person name="Schmutz J."/>
            <person name="Larimer F."/>
            <person name="Land M."/>
            <person name="Hauser L."/>
            <person name="Worsham P."/>
            <person name="Chu M."/>
            <person name="Bearden S."/>
            <person name="Garcia E."/>
            <person name="Richardson P."/>
        </authorList>
    </citation>
    <scope>NUCLEOTIDE SEQUENCE [LARGE SCALE GENOMIC DNA]</scope>
    <source>
        <strain>Pestoides F</strain>
    </source>
</reference>
<name>RLMN_YERPP</name>
<feature type="chain" id="PRO_0000350539" description="Dual-specificity RNA methyltransferase RlmN">
    <location>
        <begin position="1"/>
        <end position="398"/>
    </location>
</feature>
<feature type="domain" description="Radical SAM core" evidence="2">
    <location>
        <begin position="125"/>
        <end position="364"/>
    </location>
</feature>
<feature type="active site" description="Proton acceptor" evidence="1">
    <location>
        <position position="119"/>
    </location>
</feature>
<feature type="active site" description="S-methylcysteine intermediate" evidence="1">
    <location>
        <position position="369"/>
    </location>
</feature>
<feature type="binding site" evidence="1">
    <location>
        <position position="139"/>
    </location>
    <ligand>
        <name>[4Fe-4S] cluster</name>
        <dbReference type="ChEBI" id="CHEBI:49883"/>
        <note>4Fe-4S-S-AdoMet</note>
    </ligand>
</feature>
<feature type="binding site" evidence="1">
    <location>
        <position position="143"/>
    </location>
    <ligand>
        <name>[4Fe-4S] cluster</name>
        <dbReference type="ChEBI" id="CHEBI:49883"/>
        <note>4Fe-4S-S-AdoMet</note>
    </ligand>
</feature>
<feature type="binding site" evidence="1">
    <location>
        <position position="146"/>
    </location>
    <ligand>
        <name>[4Fe-4S] cluster</name>
        <dbReference type="ChEBI" id="CHEBI:49883"/>
        <note>4Fe-4S-S-AdoMet</note>
    </ligand>
</feature>
<feature type="binding site" evidence="1">
    <location>
        <begin position="193"/>
        <end position="194"/>
    </location>
    <ligand>
        <name>S-adenosyl-L-methionine</name>
        <dbReference type="ChEBI" id="CHEBI:59789"/>
    </ligand>
</feature>
<feature type="binding site" evidence="1">
    <location>
        <position position="225"/>
    </location>
    <ligand>
        <name>S-adenosyl-L-methionine</name>
        <dbReference type="ChEBI" id="CHEBI:59789"/>
    </ligand>
</feature>
<feature type="binding site" evidence="1">
    <location>
        <begin position="247"/>
        <end position="249"/>
    </location>
    <ligand>
        <name>S-adenosyl-L-methionine</name>
        <dbReference type="ChEBI" id="CHEBI:59789"/>
    </ligand>
</feature>
<feature type="binding site" evidence="1">
    <location>
        <position position="326"/>
    </location>
    <ligand>
        <name>S-adenosyl-L-methionine</name>
        <dbReference type="ChEBI" id="CHEBI:59789"/>
    </ligand>
</feature>
<feature type="disulfide bond" description="(transient)" evidence="1">
    <location>
        <begin position="132"/>
        <end position="369"/>
    </location>
</feature>
<dbReference type="EC" id="2.1.1.192" evidence="1"/>
<dbReference type="EMBL" id="CP000668">
    <property type="protein sequence ID" value="ABP40602.1"/>
    <property type="molecule type" value="Genomic_DNA"/>
</dbReference>
<dbReference type="RefSeq" id="WP_002209820.1">
    <property type="nucleotide sequence ID" value="NZ_CP009715.1"/>
</dbReference>
<dbReference type="SMR" id="A4TMU0"/>
<dbReference type="KEGG" id="ypp:YPDSF_2227"/>
<dbReference type="PATRIC" id="fig|386656.14.peg.3715"/>
<dbReference type="GO" id="GO:0005737">
    <property type="term" value="C:cytoplasm"/>
    <property type="evidence" value="ECO:0007669"/>
    <property type="project" value="UniProtKB-SubCell"/>
</dbReference>
<dbReference type="GO" id="GO:0051539">
    <property type="term" value="F:4 iron, 4 sulfur cluster binding"/>
    <property type="evidence" value="ECO:0007669"/>
    <property type="project" value="UniProtKB-UniRule"/>
</dbReference>
<dbReference type="GO" id="GO:0046872">
    <property type="term" value="F:metal ion binding"/>
    <property type="evidence" value="ECO:0007669"/>
    <property type="project" value="UniProtKB-KW"/>
</dbReference>
<dbReference type="GO" id="GO:0070040">
    <property type="term" value="F:rRNA (adenine(2503)-C2-)-methyltransferase activity"/>
    <property type="evidence" value="ECO:0007669"/>
    <property type="project" value="UniProtKB-UniRule"/>
</dbReference>
<dbReference type="GO" id="GO:0019843">
    <property type="term" value="F:rRNA binding"/>
    <property type="evidence" value="ECO:0007669"/>
    <property type="project" value="UniProtKB-UniRule"/>
</dbReference>
<dbReference type="GO" id="GO:0002935">
    <property type="term" value="F:tRNA (adenine(37)-C2)-methyltransferase activity"/>
    <property type="evidence" value="ECO:0007669"/>
    <property type="project" value="UniProtKB-UniRule"/>
</dbReference>
<dbReference type="GO" id="GO:0000049">
    <property type="term" value="F:tRNA binding"/>
    <property type="evidence" value="ECO:0007669"/>
    <property type="project" value="UniProtKB-UniRule"/>
</dbReference>
<dbReference type="GO" id="GO:0070475">
    <property type="term" value="P:rRNA base methylation"/>
    <property type="evidence" value="ECO:0007669"/>
    <property type="project" value="UniProtKB-UniRule"/>
</dbReference>
<dbReference type="GO" id="GO:0030488">
    <property type="term" value="P:tRNA methylation"/>
    <property type="evidence" value="ECO:0007669"/>
    <property type="project" value="UniProtKB-UniRule"/>
</dbReference>
<dbReference type="CDD" id="cd01335">
    <property type="entry name" value="Radical_SAM"/>
    <property type="match status" value="1"/>
</dbReference>
<dbReference type="FunFam" id="1.10.150.530:FF:000001">
    <property type="entry name" value="Dual-specificity RNA methyltransferase RlmN"/>
    <property type="match status" value="1"/>
</dbReference>
<dbReference type="FunFam" id="3.20.20.70:FF:000008">
    <property type="entry name" value="Dual-specificity RNA methyltransferase RlmN"/>
    <property type="match status" value="1"/>
</dbReference>
<dbReference type="Gene3D" id="1.10.150.530">
    <property type="match status" value="1"/>
</dbReference>
<dbReference type="Gene3D" id="3.20.20.70">
    <property type="entry name" value="Aldolase class I"/>
    <property type="match status" value="1"/>
</dbReference>
<dbReference type="HAMAP" id="MF_01849">
    <property type="entry name" value="RNA_methyltr_RlmN"/>
    <property type="match status" value="1"/>
</dbReference>
<dbReference type="InterPro" id="IPR013785">
    <property type="entry name" value="Aldolase_TIM"/>
</dbReference>
<dbReference type="InterPro" id="IPR040072">
    <property type="entry name" value="Methyltransferase_A"/>
</dbReference>
<dbReference type="InterPro" id="IPR048641">
    <property type="entry name" value="RlmN_N"/>
</dbReference>
<dbReference type="InterPro" id="IPR027492">
    <property type="entry name" value="RNA_MTrfase_RlmN"/>
</dbReference>
<dbReference type="InterPro" id="IPR004383">
    <property type="entry name" value="rRNA_lsu_MTrfase_RlmN/Cfr"/>
</dbReference>
<dbReference type="InterPro" id="IPR007197">
    <property type="entry name" value="rSAM"/>
</dbReference>
<dbReference type="NCBIfam" id="NF008396">
    <property type="entry name" value="PRK11194.1"/>
    <property type="match status" value="1"/>
</dbReference>
<dbReference type="NCBIfam" id="TIGR00048">
    <property type="entry name" value="rRNA_mod_RlmN"/>
    <property type="match status" value="1"/>
</dbReference>
<dbReference type="PANTHER" id="PTHR30544">
    <property type="entry name" value="23S RRNA METHYLTRANSFERASE"/>
    <property type="match status" value="1"/>
</dbReference>
<dbReference type="PANTHER" id="PTHR30544:SF5">
    <property type="entry name" value="RADICAL SAM CORE DOMAIN-CONTAINING PROTEIN"/>
    <property type="match status" value="1"/>
</dbReference>
<dbReference type="Pfam" id="PF04055">
    <property type="entry name" value="Radical_SAM"/>
    <property type="match status" value="1"/>
</dbReference>
<dbReference type="Pfam" id="PF21016">
    <property type="entry name" value="RlmN_N"/>
    <property type="match status" value="1"/>
</dbReference>
<dbReference type="PIRSF" id="PIRSF006004">
    <property type="entry name" value="CHP00048"/>
    <property type="match status" value="1"/>
</dbReference>
<dbReference type="SFLD" id="SFLDF00275">
    <property type="entry name" value="adenosine_C2_methyltransferase"/>
    <property type="match status" value="1"/>
</dbReference>
<dbReference type="SFLD" id="SFLDG01062">
    <property type="entry name" value="methyltransferase_(Class_A)"/>
    <property type="match status" value="1"/>
</dbReference>
<dbReference type="SUPFAM" id="SSF102114">
    <property type="entry name" value="Radical SAM enzymes"/>
    <property type="match status" value="1"/>
</dbReference>
<dbReference type="PROSITE" id="PS51918">
    <property type="entry name" value="RADICAL_SAM"/>
    <property type="match status" value="1"/>
</dbReference>
<protein>
    <recommendedName>
        <fullName evidence="1">Dual-specificity RNA methyltransferase RlmN</fullName>
        <ecNumber evidence="1">2.1.1.192</ecNumber>
    </recommendedName>
    <alternativeName>
        <fullName evidence="1">23S rRNA (adenine(2503)-C(2))-methyltransferase</fullName>
    </alternativeName>
    <alternativeName>
        <fullName evidence="1">23S rRNA m2A2503 methyltransferase</fullName>
    </alternativeName>
    <alternativeName>
        <fullName evidence="1">Ribosomal RNA large subunit methyltransferase N</fullName>
    </alternativeName>
    <alternativeName>
        <fullName evidence="1">tRNA (adenine(37)-C(2))-methyltransferase</fullName>
    </alternativeName>
    <alternativeName>
        <fullName evidence="1">tRNA m2A37 methyltransferase</fullName>
    </alternativeName>
</protein>
<gene>
    <name evidence="1" type="primary">rlmN</name>
    <name type="ordered locus">YPDSF_2227</name>
</gene>